<gene>
    <name evidence="1" type="primary">ureD</name>
    <name type="ordered locus">Francci3_0830</name>
</gene>
<comment type="function">
    <text evidence="1">Required for maturation of urease via the functional incorporation of the urease nickel metallocenter.</text>
</comment>
<comment type="subunit">
    <text evidence="1">UreD, UreF and UreG form a complex that acts as a GTP-hydrolysis-dependent molecular chaperone, activating the urease apoprotein by helping to assemble the nickel containing metallocenter of UreC. The UreE protein probably delivers the nickel.</text>
</comment>
<comment type="subcellular location">
    <subcellularLocation>
        <location evidence="1">Cytoplasm</location>
    </subcellularLocation>
</comment>
<comment type="similarity">
    <text evidence="1">Belongs to the UreD family.</text>
</comment>
<reference key="1">
    <citation type="journal article" date="2007" name="Genome Res.">
        <title>Genome characteristics of facultatively symbiotic Frankia sp. strains reflect host range and host plant biogeography.</title>
        <authorList>
            <person name="Normand P."/>
            <person name="Lapierre P."/>
            <person name="Tisa L.S."/>
            <person name="Gogarten J.P."/>
            <person name="Alloisio N."/>
            <person name="Bagnarol E."/>
            <person name="Bassi C.A."/>
            <person name="Berry A.M."/>
            <person name="Bickhart D.M."/>
            <person name="Choisne N."/>
            <person name="Couloux A."/>
            <person name="Cournoyer B."/>
            <person name="Cruveiller S."/>
            <person name="Daubin V."/>
            <person name="Demange N."/>
            <person name="Francino M.P."/>
            <person name="Goltsman E."/>
            <person name="Huang Y."/>
            <person name="Kopp O.R."/>
            <person name="Labarre L."/>
            <person name="Lapidus A."/>
            <person name="Lavire C."/>
            <person name="Marechal J."/>
            <person name="Martinez M."/>
            <person name="Mastronunzio J.E."/>
            <person name="Mullin B.C."/>
            <person name="Niemann J."/>
            <person name="Pujic P."/>
            <person name="Rawnsley T."/>
            <person name="Rouy Z."/>
            <person name="Schenowitz C."/>
            <person name="Sellstedt A."/>
            <person name="Tavares F."/>
            <person name="Tomkins J.P."/>
            <person name="Vallenet D."/>
            <person name="Valverde C."/>
            <person name="Wall L.G."/>
            <person name="Wang Y."/>
            <person name="Medigue C."/>
            <person name="Benson D.R."/>
        </authorList>
    </citation>
    <scope>NUCLEOTIDE SEQUENCE [LARGE SCALE GENOMIC DNA]</scope>
    <source>
        <strain>DSM 45818 / CECT 9043 / HFP020203 / CcI3</strain>
    </source>
</reference>
<dbReference type="EMBL" id="CP000249">
    <property type="protein sequence ID" value="ABD10214.1"/>
    <property type="molecule type" value="Genomic_DNA"/>
</dbReference>
<dbReference type="RefSeq" id="WP_011435283.1">
    <property type="nucleotide sequence ID" value="NZ_LRTJ01000051.1"/>
</dbReference>
<dbReference type="SMR" id="Q2JES8"/>
<dbReference type="STRING" id="106370.Francci3_0830"/>
<dbReference type="KEGG" id="fra:Francci3_0830"/>
<dbReference type="eggNOG" id="COG0829">
    <property type="taxonomic scope" value="Bacteria"/>
</dbReference>
<dbReference type="HOGENOM" id="CLU_055097_2_0_11"/>
<dbReference type="OrthoDB" id="8677206at2"/>
<dbReference type="PhylomeDB" id="Q2JES8"/>
<dbReference type="Proteomes" id="UP000001937">
    <property type="component" value="Chromosome"/>
</dbReference>
<dbReference type="GO" id="GO:0005737">
    <property type="term" value="C:cytoplasm"/>
    <property type="evidence" value="ECO:0007669"/>
    <property type="project" value="UniProtKB-SubCell"/>
</dbReference>
<dbReference type="GO" id="GO:0016151">
    <property type="term" value="F:nickel cation binding"/>
    <property type="evidence" value="ECO:0007669"/>
    <property type="project" value="UniProtKB-UniRule"/>
</dbReference>
<dbReference type="HAMAP" id="MF_01384">
    <property type="entry name" value="UreD"/>
    <property type="match status" value="1"/>
</dbReference>
<dbReference type="InterPro" id="IPR002669">
    <property type="entry name" value="UreD"/>
</dbReference>
<dbReference type="Pfam" id="PF01774">
    <property type="entry name" value="UreD"/>
    <property type="match status" value="1"/>
</dbReference>
<protein>
    <recommendedName>
        <fullName evidence="1">Urease accessory protein UreD</fullName>
    </recommendedName>
</protein>
<organism>
    <name type="scientific">Frankia casuarinae (strain DSM 45818 / CECT 9043 / HFP020203 / CcI3)</name>
    <dbReference type="NCBI Taxonomy" id="106370"/>
    <lineage>
        <taxon>Bacteria</taxon>
        <taxon>Bacillati</taxon>
        <taxon>Actinomycetota</taxon>
        <taxon>Actinomycetes</taxon>
        <taxon>Frankiales</taxon>
        <taxon>Frankiaceae</taxon>
        <taxon>Frankia</taxon>
    </lineage>
</organism>
<accession>Q2JES8</accession>
<proteinExistence type="inferred from homology"/>
<keyword id="KW-0143">Chaperone</keyword>
<keyword id="KW-0963">Cytoplasm</keyword>
<keyword id="KW-0996">Nickel insertion</keyword>
<keyword id="KW-1185">Reference proteome</keyword>
<sequence>MAAMRRGVILGGVAAGPEGPLVTAARTGRTAVRARAVIRVESAPDGTARLIELRSDVPIVLRQTGASPGRTRAPSTVPALSADALPTATVHLVNATAGPLAGDDLGLDISVGSGVRLVVRSVAATVALPGHGPGPSRFTVSARVAPGGALDFAPEPTVAARGSDHLLVTDVHLATTAWLRLREEIVLGRFGETTGSIRSTLRVDMDAHAEVDPPSEPTPLLRQDLVLGPEIPGLTGPALLGSARALGSLLVAGPDPVGSPAARRESVPAKRAESGAQAAVADGVALLPLAGPGYLISALAENAVTLRRRLEQGPAPATV</sequence>
<feature type="chain" id="PRO_0000346564" description="Urease accessory protein UreD">
    <location>
        <begin position="1"/>
        <end position="319"/>
    </location>
</feature>
<feature type="region of interest" description="Disordered" evidence="2">
    <location>
        <begin position="254"/>
        <end position="273"/>
    </location>
</feature>
<feature type="compositionally biased region" description="Basic and acidic residues" evidence="2">
    <location>
        <begin position="262"/>
        <end position="273"/>
    </location>
</feature>
<name>URED_FRACC</name>
<evidence type="ECO:0000255" key="1">
    <source>
        <dbReference type="HAMAP-Rule" id="MF_01384"/>
    </source>
</evidence>
<evidence type="ECO:0000256" key="2">
    <source>
        <dbReference type="SAM" id="MobiDB-lite"/>
    </source>
</evidence>